<comment type="function">
    <text evidence="1">Catalyzes the reversible adenylation of nicotinate mononucleotide (NaMN) to nicotinic acid adenine dinucleotide (NaAD).</text>
</comment>
<comment type="catalytic activity">
    <reaction evidence="1">
        <text>nicotinate beta-D-ribonucleotide + ATP + H(+) = deamido-NAD(+) + diphosphate</text>
        <dbReference type="Rhea" id="RHEA:22860"/>
        <dbReference type="ChEBI" id="CHEBI:15378"/>
        <dbReference type="ChEBI" id="CHEBI:30616"/>
        <dbReference type="ChEBI" id="CHEBI:33019"/>
        <dbReference type="ChEBI" id="CHEBI:57502"/>
        <dbReference type="ChEBI" id="CHEBI:58437"/>
        <dbReference type="EC" id="2.7.7.18"/>
    </reaction>
</comment>
<comment type="pathway">
    <text evidence="1">Cofactor biosynthesis; NAD(+) biosynthesis; deamido-NAD(+) from nicotinate D-ribonucleotide: step 1/1.</text>
</comment>
<comment type="similarity">
    <text evidence="1">Belongs to the NadD family.</text>
</comment>
<name>NADD_XYLF2</name>
<accession>B2I5T8</accession>
<evidence type="ECO:0000255" key="1">
    <source>
        <dbReference type="HAMAP-Rule" id="MF_00244"/>
    </source>
</evidence>
<feature type="chain" id="PRO_1000100802" description="Probable nicotinate-nucleotide adenylyltransferase">
    <location>
        <begin position="1"/>
        <end position="222"/>
    </location>
</feature>
<gene>
    <name evidence="1" type="primary">nadD</name>
    <name type="ordered locus">XfasM23_1312</name>
</gene>
<proteinExistence type="inferred from homology"/>
<protein>
    <recommendedName>
        <fullName evidence="1">Probable nicotinate-nucleotide adenylyltransferase</fullName>
        <ecNumber evidence="1">2.7.7.18</ecNumber>
    </recommendedName>
    <alternativeName>
        <fullName evidence="1">Deamido-NAD(+) diphosphorylase</fullName>
    </alternativeName>
    <alternativeName>
        <fullName evidence="1">Deamido-NAD(+) pyrophosphorylase</fullName>
    </alternativeName>
    <alternativeName>
        <fullName evidence="1">Nicotinate mononucleotide adenylyltransferase</fullName>
        <shortName evidence="1">NaMN adenylyltransferase</shortName>
    </alternativeName>
</protein>
<keyword id="KW-0067">ATP-binding</keyword>
<keyword id="KW-0520">NAD</keyword>
<keyword id="KW-0547">Nucleotide-binding</keyword>
<keyword id="KW-0548">Nucleotidyltransferase</keyword>
<keyword id="KW-0662">Pyridine nucleotide biosynthesis</keyword>
<keyword id="KW-0808">Transferase</keyword>
<sequence length="222" mass="24510">MPSLHVFYGGTFDPVHVGHLAIARAAHAALQAPIALIPSADPPHRPTPGSSSMDRLRMLQLAVSKEPGLSADPRELQRAARQNRSSYTVDTLTEVRSELGPKTSIIWLLGADAFVNLSNWKDWQMLPELTHLVIANRPGITLQTQLPPKMATVFNHRWVQDPATLRKTPHGHLWLLNQHPNPSSASKVRAAISAAAHWEADLTPEVAQYIRTHGLYGIHDIN</sequence>
<organism>
    <name type="scientific">Xylella fastidiosa (strain M23)</name>
    <dbReference type="NCBI Taxonomy" id="405441"/>
    <lineage>
        <taxon>Bacteria</taxon>
        <taxon>Pseudomonadati</taxon>
        <taxon>Pseudomonadota</taxon>
        <taxon>Gammaproteobacteria</taxon>
        <taxon>Lysobacterales</taxon>
        <taxon>Lysobacteraceae</taxon>
        <taxon>Xylella</taxon>
    </lineage>
</organism>
<dbReference type="EC" id="2.7.7.18" evidence="1"/>
<dbReference type="EMBL" id="CP001011">
    <property type="protein sequence ID" value="ACB92733.1"/>
    <property type="molecule type" value="Genomic_DNA"/>
</dbReference>
<dbReference type="RefSeq" id="WP_004088581.1">
    <property type="nucleotide sequence ID" value="NC_010577.1"/>
</dbReference>
<dbReference type="SMR" id="B2I5T8"/>
<dbReference type="GeneID" id="93905033"/>
<dbReference type="KEGG" id="xfn:XfasM23_1312"/>
<dbReference type="HOGENOM" id="CLU_069765_0_0_6"/>
<dbReference type="UniPathway" id="UPA00253">
    <property type="reaction ID" value="UER00332"/>
</dbReference>
<dbReference type="Proteomes" id="UP000001698">
    <property type="component" value="Chromosome"/>
</dbReference>
<dbReference type="GO" id="GO:0005524">
    <property type="term" value="F:ATP binding"/>
    <property type="evidence" value="ECO:0007669"/>
    <property type="project" value="UniProtKB-KW"/>
</dbReference>
<dbReference type="GO" id="GO:0004515">
    <property type="term" value="F:nicotinate-nucleotide adenylyltransferase activity"/>
    <property type="evidence" value="ECO:0007669"/>
    <property type="project" value="UniProtKB-UniRule"/>
</dbReference>
<dbReference type="GO" id="GO:0009435">
    <property type="term" value="P:NAD biosynthetic process"/>
    <property type="evidence" value="ECO:0007669"/>
    <property type="project" value="UniProtKB-UniRule"/>
</dbReference>
<dbReference type="CDD" id="cd02165">
    <property type="entry name" value="NMNAT"/>
    <property type="match status" value="1"/>
</dbReference>
<dbReference type="Gene3D" id="3.40.50.620">
    <property type="entry name" value="HUPs"/>
    <property type="match status" value="1"/>
</dbReference>
<dbReference type="HAMAP" id="MF_00244">
    <property type="entry name" value="NaMN_adenylyltr"/>
    <property type="match status" value="1"/>
</dbReference>
<dbReference type="InterPro" id="IPR004821">
    <property type="entry name" value="Cyt_trans-like"/>
</dbReference>
<dbReference type="InterPro" id="IPR005248">
    <property type="entry name" value="NadD/NMNAT"/>
</dbReference>
<dbReference type="InterPro" id="IPR014729">
    <property type="entry name" value="Rossmann-like_a/b/a_fold"/>
</dbReference>
<dbReference type="NCBIfam" id="TIGR00125">
    <property type="entry name" value="cyt_tran_rel"/>
    <property type="match status" value="1"/>
</dbReference>
<dbReference type="NCBIfam" id="TIGR00482">
    <property type="entry name" value="nicotinate (nicotinamide) nucleotide adenylyltransferase"/>
    <property type="match status" value="1"/>
</dbReference>
<dbReference type="NCBIfam" id="NF000839">
    <property type="entry name" value="PRK00071.1-1"/>
    <property type="match status" value="1"/>
</dbReference>
<dbReference type="PANTHER" id="PTHR39321">
    <property type="entry name" value="NICOTINATE-NUCLEOTIDE ADENYLYLTRANSFERASE-RELATED"/>
    <property type="match status" value="1"/>
</dbReference>
<dbReference type="PANTHER" id="PTHR39321:SF3">
    <property type="entry name" value="PHOSPHOPANTETHEINE ADENYLYLTRANSFERASE"/>
    <property type="match status" value="1"/>
</dbReference>
<dbReference type="Pfam" id="PF01467">
    <property type="entry name" value="CTP_transf_like"/>
    <property type="match status" value="1"/>
</dbReference>
<dbReference type="SUPFAM" id="SSF52374">
    <property type="entry name" value="Nucleotidylyl transferase"/>
    <property type="match status" value="1"/>
</dbReference>
<reference key="1">
    <citation type="journal article" date="2010" name="J. Bacteriol.">
        <title>Whole genome sequences of two Xylella fastidiosa strains (M12 and M23) causing almond leaf scorch disease in California.</title>
        <authorList>
            <person name="Chen J."/>
            <person name="Xie G."/>
            <person name="Han S."/>
            <person name="Chertkov O."/>
            <person name="Sims D."/>
            <person name="Civerolo E.L."/>
        </authorList>
    </citation>
    <scope>NUCLEOTIDE SEQUENCE [LARGE SCALE GENOMIC DNA]</scope>
    <source>
        <strain>M23</strain>
    </source>
</reference>